<keyword id="KW-0030">Aminoacyl-tRNA synthetase</keyword>
<keyword id="KW-0067">ATP-binding</keyword>
<keyword id="KW-0963">Cytoplasm</keyword>
<keyword id="KW-0903">Direct protein sequencing</keyword>
<keyword id="KW-0436">Ligase</keyword>
<keyword id="KW-0460">Magnesium</keyword>
<keyword id="KW-0479">Metal-binding</keyword>
<keyword id="KW-0547">Nucleotide-binding</keyword>
<keyword id="KW-0648">Protein biosynthesis</keyword>
<keyword id="KW-1185">Reference proteome</keyword>
<comment type="catalytic activity">
    <reaction evidence="3">
        <text>tRNA(Phe) + L-phenylalanine + ATP = L-phenylalanyl-tRNA(Phe) + AMP + diphosphate + H(+)</text>
        <dbReference type="Rhea" id="RHEA:19413"/>
        <dbReference type="Rhea" id="RHEA-COMP:9668"/>
        <dbReference type="Rhea" id="RHEA-COMP:9699"/>
        <dbReference type="ChEBI" id="CHEBI:15378"/>
        <dbReference type="ChEBI" id="CHEBI:30616"/>
        <dbReference type="ChEBI" id="CHEBI:33019"/>
        <dbReference type="ChEBI" id="CHEBI:58095"/>
        <dbReference type="ChEBI" id="CHEBI:78442"/>
        <dbReference type="ChEBI" id="CHEBI:78531"/>
        <dbReference type="ChEBI" id="CHEBI:456215"/>
        <dbReference type="EC" id="6.1.1.20"/>
    </reaction>
    <physiologicalReaction direction="left-to-right" evidence="3">
        <dbReference type="Rhea" id="RHEA:19414"/>
    </physiologicalReaction>
</comment>
<comment type="cofactor">
    <cofactor evidence="1">
        <name>Mg(2+)</name>
        <dbReference type="ChEBI" id="CHEBI:18420"/>
    </cofactor>
</comment>
<comment type="subunit">
    <text evidence="3">Heterotetramer; dimer of two heterodimers formed by FARSA and FARSB.</text>
</comment>
<comment type="subcellular location">
    <subcellularLocation>
        <location evidence="2">Cytoplasm</location>
    </subcellularLocation>
</comment>
<comment type="similarity">
    <text evidence="5">Belongs to the class-II aminoacyl-tRNA synthetase family. Phe-tRNA synthetase alpha subunit type 2 subfamily.</text>
</comment>
<name>SYFA_CHICK</name>
<accession>Q5ZJQ2</accession>
<sequence length="443" mass="49550">MSPSVAELLLQRLERTPPGPEGGLCSLEAAAALGLDHQTLVGAVKSLQALGEVIEAETRATTRWELSAEGEEVLRDGSPEVRLFRSVPSEGLPQSDAMKLPGAQVGFSKAMANKWLRLDKGAPGGPRIFRAVDAVQDVVQSSLRQVQEGNGGSLSERERTDLKRRKLLLEVTLKSYWIRKGSAFSTAVVRQETDLTPEMIATGSWRKLPFKAYNFSALGLPPTCGHLHPLLKVRSQLRQIFLEMGFTEMPTDNFVESSFWNFDALFQPQQHPARDQHDTFFLQDPAEAPELPANYMARVKKVHSQGGYGSQGYKYEWKVEEARKNLLRTHTTSASARALYHLARQGKFTPVKYFSIDRVFRNESLDATHLAEFHQVEGVVADRGLTLGHLMGTLQQFFTKLGISKLRFKPAYNPYTEPSMEVFSYHEGLKKWVEVGNSGVFRS</sequence>
<organism>
    <name type="scientific">Gallus gallus</name>
    <name type="common">Chicken</name>
    <dbReference type="NCBI Taxonomy" id="9031"/>
    <lineage>
        <taxon>Eukaryota</taxon>
        <taxon>Metazoa</taxon>
        <taxon>Chordata</taxon>
        <taxon>Craniata</taxon>
        <taxon>Vertebrata</taxon>
        <taxon>Euteleostomi</taxon>
        <taxon>Archelosauria</taxon>
        <taxon>Archosauria</taxon>
        <taxon>Dinosauria</taxon>
        <taxon>Saurischia</taxon>
        <taxon>Theropoda</taxon>
        <taxon>Coelurosauria</taxon>
        <taxon>Aves</taxon>
        <taxon>Neognathae</taxon>
        <taxon>Galloanserae</taxon>
        <taxon>Galliformes</taxon>
        <taxon>Phasianidae</taxon>
        <taxon>Phasianinae</taxon>
        <taxon>Gallus</taxon>
    </lineage>
</organism>
<reference key="1">
    <citation type="journal article" date="2005" name="Genome Biol.">
        <title>Full-length cDNAs from chicken bursal lymphocytes to facilitate gene function analysis.</title>
        <authorList>
            <person name="Caldwell R.B."/>
            <person name="Kierzek A.M."/>
            <person name="Arakawa H."/>
            <person name="Bezzubov Y."/>
            <person name="Zaim J."/>
            <person name="Fiedler P."/>
            <person name="Kutter S."/>
            <person name="Blagodatski A."/>
            <person name="Kostovska D."/>
            <person name="Koter M."/>
            <person name="Plachy J."/>
            <person name="Carninci P."/>
            <person name="Hayashizaki Y."/>
            <person name="Buerstedde J.-M."/>
        </authorList>
    </citation>
    <scope>NUCLEOTIDE SEQUENCE [LARGE SCALE MRNA]</scope>
    <source>
        <strain>CB</strain>
        <tissue>Bursa of Fabricius</tissue>
    </source>
</reference>
<reference key="2">
    <citation type="submission" date="2007-01" db="UniProtKB">
        <authorList>
            <person name="Bienvenut W.V."/>
            <person name="Black E.J."/>
            <person name="Gillespie D.A."/>
        </authorList>
    </citation>
    <scope>PROTEIN SEQUENCE OF 2-12; 46-59 AND 131-144</scope>
    <scope>CLEAVAGE OF INITIATOR METHIONINE</scope>
    <scope>IDENTIFICATION BY MASS SPECTROMETRY</scope>
    <source>
        <tissue>B-cell lymphoma</tissue>
    </source>
</reference>
<evidence type="ECO:0000250" key="1">
    <source>
        <dbReference type="UniProtKB" id="A5K9S0"/>
    </source>
</evidence>
<evidence type="ECO:0000250" key="2">
    <source>
        <dbReference type="UniProtKB" id="Q505J8"/>
    </source>
</evidence>
<evidence type="ECO:0000250" key="3">
    <source>
        <dbReference type="UniProtKB" id="Q9Y285"/>
    </source>
</evidence>
<evidence type="ECO:0000269" key="4">
    <source ref="2"/>
</evidence>
<evidence type="ECO:0000305" key="5"/>
<feature type="initiator methionine" description="Removed" evidence="4">
    <location>
        <position position="1"/>
    </location>
</feature>
<feature type="chain" id="PRO_0000280450" description="Phenylalanine--tRNA ligase alpha subunit">
    <location>
        <begin position="2"/>
        <end position="443"/>
    </location>
</feature>
<feature type="binding site" evidence="3">
    <location>
        <position position="332"/>
    </location>
    <ligand>
        <name>L-phenylalanine</name>
        <dbReference type="ChEBI" id="CHEBI:58095"/>
    </ligand>
</feature>
<feature type="binding site" evidence="3">
    <location>
        <begin position="375"/>
        <end position="377"/>
    </location>
    <ligand>
        <name>L-phenylalanine</name>
        <dbReference type="ChEBI" id="CHEBI:58095"/>
    </ligand>
</feature>
<feature type="binding site" evidence="3">
    <location>
        <position position="415"/>
    </location>
    <ligand>
        <name>L-phenylalanine</name>
        <dbReference type="ChEBI" id="CHEBI:58095"/>
    </ligand>
</feature>
<feature type="binding site" evidence="1">
    <location>
        <position position="417"/>
    </location>
    <ligand>
        <name>Mg(2+)</name>
        <dbReference type="ChEBI" id="CHEBI:18420"/>
        <note>shared with beta subunit</note>
    </ligand>
</feature>
<feature type="binding site" evidence="3">
    <location>
        <position position="441"/>
    </location>
    <ligand>
        <name>L-phenylalanine</name>
        <dbReference type="ChEBI" id="CHEBI:58095"/>
    </ligand>
</feature>
<dbReference type="EC" id="6.1.1.20" evidence="3"/>
<dbReference type="EMBL" id="AJ720382">
    <property type="protein sequence ID" value="CAG32041.1"/>
    <property type="molecule type" value="mRNA"/>
</dbReference>
<dbReference type="RefSeq" id="NP_001258086.1">
    <property type="nucleotide sequence ID" value="NM_001271157.1"/>
</dbReference>
<dbReference type="SMR" id="Q5ZJQ2"/>
<dbReference type="FunCoup" id="Q5ZJQ2">
    <property type="interactions" value="2823"/>
</dbReference>
<dbReference type="STRING" id="9031.ENSGALP00000055258"/>
<dbReference type="PaxDb" id="9031-ENSGALP00000041944"/>
<dbReference type="KEGG" id="gga:100859604"/>
<dbReference type="VEuPathDB" id="HostDB:geneid_100859604"/>
<dbReference type="eggNOG" id="KOG2784">
    <property type="taxonomic scope" value="Eukaryota"/>
</dbReference>
<dbReference type="InParanoid" id="Q5ZJQ2"/>
<dbReference type="OrthoDB" id="238316at2759"/>
<dbReference type="PhylomeDB" id="Q5ZJQ2"/>
<dbReference type="PRO" id="PR:Q5ZJQ2"/>
<dbReference type="Proteomes" id="UP000000539">
    <property type="component" value="Unassembled WGS sequence"/>
</dbReference>
<dbReference type="GO" id="GO:0005737">
    <property type="term" value="C:cytoplasm"/>
    <property type="evidence" value="ECO:0000250"/>
    <property type="project" value="UniProtKB"/>
</dbReference>
<dbReference type="GO" id="GO:0009328">
    <property type="term" value="C:phenylalanine-tRNA ligase complex"/>
    <property type="evidence" value="ECO:0000250"/>
    <property type="project" value="UniProtKB"/>
</dbReference>
<dbReference type="GO" id="GO:0005524">
    <property type="term" value="F:ATP binding"/>
    <property type="evidence" value="ECO:0007669"/>
    <property type="project" value="UniProtKB-KW"/>
</dbReference>
<dbReference type="GO" id="GO:0000287">
    <property type="term" value="F:magnesium ion binding"/>
    <property type="evidence" value="ECO:0000250"/>
    <property type="project" value="UniProtKB"/>
</dbReference>
<dbReference type="GO" id="GO:0004826">
    <property type="term" value="F:phenylalanine-tRNA ligase activity"/>
    <property type="evidence" value="ECO:0000250"/>
    <property type="project" value="UniProtKB"/>
</dbReference>
<dbReference type="GO" id="GO:0000049">
    <property type="term" value="F:tRNA binding"/>
    <property type="evidence" value="ECO:0007669"/>
    <property type="project" value="InterPro"/>
</dbReference>
<dbReference type="GO" id="GO:0006432">
    <property type="term" value="P:phenylalanyl-tRNA aminoacylation"/>
    <property type="evidence" value="ECO:0000250"/>
    <property type="project" value="UniProtKB"/>
</dbReference>
<dbReference type="GO" id="GO:0051290">
    <property type="term" value="P:protein heterotetramerization"/>
    <property type="evidence" value="ECO:0000250"/>
    <property type="project" value="UniProtKB"/>
</dbReference>
<dbReference type="CDD" id="cd00496">
    <property type="entry name" value="PheRS_alpha_core"/>
    <property type="match status" value="1"/>
</dbReference>
<dbReference type="FunFam" id="1.10.10.2320:FF:000001">
    <property type="entry name" value="phenylalanine--tRNA ligase alpha subunit"/>
    <property type="match status" value="1"/>
</dbReference>
<dbReference type="FunFam" id="3.30.930.10:FF:000178">
    <property type="entry name" value="Phenylalanyl-tRNA synthetase subunit alpha"/>
    <property type="match status" value="1"/>
</dbReference>
<dbReference type="Gene3D" id="1.10.10.2320">
    <property type="match status" value="1"/>
</dbReference>
<dbReference type="Gene3D" id="1.10.10.2330">
    <property type="match status" value="1"/>
</dbReference>
<dbReference type="Gene3D" id="3.30.1370.240">
    <property type="match status" value="1"/>
</dbReference>
<dbReference type="Gene3D" id="3.30.930.10">
    <property type="entry name" value="Bira Bifunctional Protein, Domain 2"/>
    <property type="match status" value="1"/>
</dbReference>
<dbReference type="InterPro" id="IPR006195">
    <property type="entry name" value="aa-tRNA-synth_II"/>
</dbReference>
<dbReference type="InterPro" id="IPR045864">
    <property type="entry name" value="aa-tRNA-synth_II/BPL/LPL"/>
</dbReference>
<dbReference type="InterPro" id="IPR004529">
    <property type="entry name" value="Phe-tRNA-synth_IIc_asu"/>
</dbReference>
<dbReference type="InterPro" id="IPR002319">
    <property type="entry name" value="Phenylalanyl-tRNA_Synthase"/>
</dbReference>
<dbReference type="InterPro" id="IPR040724">
    <property type="entry name" value="PheRS_DBD1"/>
</dbReference>
<dbReference type="InterPro" id="IPR040586">
    <property type="entry name" value="PheRS_DBD2"/>
</dbReference>
<dbReference type="InterPro" id="IPR040725">
    <property type="entry name" value="PheRS_DBD3"/>
</dbReference>
<dbReference type="NCBIfam" id="TIGR00468">
    <property type="entry name" value="pheS"/>
    <property type="match status" value="1"/>
</dbReference>
<dbReference type="NCBIfam" id="NF003210">
    <property type="entry name" value="PRK04172.1"/>
    <property type="match status" value="1"/>
</dbReference>
<dbReference type="PANTHER" id="PTHR11538:SF40">
    <property type="entry name" value="PHENYLALANINE--TRNA LIGASE ALPHA SUBUNIT"/>
    <property type="match status" value="1"/>
</dbReference>
<dbReference type="PANTHER" id="PTHR11538">
    <property type="entry name" value="PHENYLALANYL-TRNA SYNTHETASE"/>
    <property type="match status" value="1"/>
</dbReference>
<dbReference type="Pfam" id="PF18552">
    <property type="entry name" value="PheRS_DBD1"/>
    <property type="match status" value="1"/>
</dbReference>
<dbReference type="Pfam" id="PF18554">
    <property type="entry name" value="PheRS_DBD2"/>
    <property type="match status" value="1"/>
</dbReference>
<dbReference type="Pfam" id="PF18553">
    <property type="entry name" value="PheRS_DBD3"/>
    <property type="match status" value="1"/>
</dbReference>
<dbReference type="Pfam" id="PF01409">
    <property type="entry name" value="tRNA-synt_2d"/>
    <property type="match status" value="1"/>
</dbReference>
<dbReference type="SUPFAM" id="SSF55681">
    <property type="entry name" value="Class II aaRS and biotin synthetases"/>
    <property type="match status" value="1"/>
</dbReference>
<dbReference type="PROSITE" id="PS50862">
    <property type="entry name" value="AA_TRNA_LIGASE_II"/>
    <property type="match status" value="1"/>
</dbReference>
<proteinExistence type="evidence at protein level"/>
<gene>
    <name type="primary">FARSA</name>
    <name type="synonym">FARSLA</name>
    <name type="ORF">RCJMB04_16g22</name>
</gene>
<protein>
    <recommendedName>
        <fullName>Phenylalanine--tRNA ligase alpha subunit</fullName>
        <ecNumber evidence="3">6.1.1.20</ecNumber>
    </recommendedName>
    <alternativeName>
        <fullName>Phenylalanyl-tRNA synthetase alpha subunit</fullName>
        <shortName>PheRS</shortName>
    </alternativeName>
</protein>